<evidence type="ECO:0000255" key="1">
    <source>
        <dbReference type="HAMAP-Rule" id="MF_00319"/>
    </source>
</evidence>
<accession>B7MI50</accession>
<keyword id="KW-0997">Cell inner membrane</keyword>
<keyword id="KW-1003">Cell membrane</keyword>
<keyword id="KW-0378">Hydrolase</keyword>
<keyword id="KW-0444">Lipid biosynthesis</keyword>
<keyword id="KW-0443">Lipid metabolism</keyword>
<keyword id="KW-0472">Membrane</keyword>
<keyword id="KW-0594">Phospholipid biosynthesis</keyword>
<keyword id="KW-1208">Phospholipid metabolism</keyword>
<keyword id="KW-1185">Reference proteome</keyword>
<keyword id="KW-0812">Transmembrane</keyword>
<keyword id="KW-1133">Transmembrane helix</keyword>
<reference key="1">
    <citation type="journal article" date="2009" name="PLoS Genet.">
        <title>Organised genome dynamics in the Escherichia coli species results in highly diverse adaptive paths.</title>
        <authorList>
            <person name="Touchon M."/>
            <person name="Hoede C."/>
            <person name="Tenaillon O."/>
            <person name="Barbe V."/>
            <person name="Baeriswyl S."/>
            <person name="Bidet P."/>
            <person name="Bingen E."/>
            <person name="Bonacorsi S."/>
            <person name="Bouchier C."/>
            <person name="Bouvet O."/>
            <person name="Calteau A."/>
            <person name="Chiapello H."/>
            <person name="Clermont O."/>
            <person name="Cruveiller S."/>
            <person name="Danchin A."/>
            <person name="Diard M."/>
            <person name="Dossat C."/>
            <person name="Karoui M.E."/>
            <person name="Frapy E."/>
            <person name="Garry L."/>
            <person name="Ghigo J.M."/>
            <person name="Gilles A.M."/>
            <person name="Johnson J."/>
            <person name="Le Bouguenec C."/>
            <person name="Lescat M."/>
            <person name="Mangenot S."/>
            <person name="Martinez-Jehanne V."/>
            <person name="Matic I."/>
            <person name="Nassif X."/>
            <person name="Oztas S."/>
            <person name="Petit M.A."/>
            <person name="Pichon C."/>
            <person name="Rouy Z."/>
            <person name="Ruf C.S."/>
            <person name="Schneider D."/>
            <person name="Tourret J."/>
            <person name="Vacherie B."/>
            <person name="Vallenet D."/>
            <person name="Medigue C."/>
            <person name="Rocha E.P.C."/>
            <person name="Denamur E."/>
        </authorList>
    </citation>
    <scope>NUCLEOTIDE SEQUENCE [LARGE SCALE GENOMIC DNA]</scope>
    <source>
        <strain>S88 / ExPEC</strain>
    </source>
</reference>
<name>CDH_ECO45</name>
<protein>
    <recommendedName>
        <fullName evidence="1">CDP-diacylglycerol pyrophosphatase</fullName>
        <ecNumber evidence="1">3.6.1.26</ecNumber>
    </recommendedName>
    <alternativeName>
        <fullName evidence="1">CDP-diacylglycerol phosphatidylhydrolase</fullName>
    </alternativeName>
    <alternativeName>
        <fullName evidence="1">CDP-diglyceride hydrolase</fullName>
    </alternativeName>
</protein>
<proteinExistence type="inferred from homology"/>
<gene>
    <name evidence="1" type="primary">cdh</name>
    <name type="ordered locus">ECS88_4368</name>
</gene>
<comment type="catalytic activity">
    <reaction evidence="1">
        <text>a CDP-1,2-diacyl-sn-glycerol + H2O = a 1,2-diacyl-sn-glycero-3-phosphate + CMP + 2 H(+)</text>
        <dbReference type="Rhea" id="RHEA:15221"/>
        <dbReference type="ChEBI" id="CHEBI:15377"/>
        <dbReference type="ChEBI" id="CHEBI:15378"/>
        <dbReference type="ChEBI" id="CHEBI:58332"/>
        <dbReference type="ChEBI" id="CHEBI:58608"/>
        <dbReference type="ChEBI" id="CHEBI:60377"/>
        <dbReference type="EC" id="3.6.1.26"/>
    </reaction>
</comment>
<comment type="pathway">
    <text evidence="1">Phospholipid metabolism; CDP-diacylglycerol degradation; phosphatidate from CDP-diacylglycerol: step 1/1.</text>
</comment>
<comment type="subcellular location">
    <subcellularLocation>
        <location evidence="1">Cell inner membrane</location>
        <topology evidence="1">Single-pass membrane protein</topology>
    </subcellularLocation>
</comment>
<comment type="similarity">
    <text evidence="1">Belongs to the Cdh family.</text>
</comment>
<organism>
    <name type="scientific">Escherichia coli O45:K1 (strain S88 / ExPEC)</name>
    <dbReference type="NCBI Taxonomy" id="585035"/>
    <lineage>
        <taxon>Bacteria</taxon>
        <taxon>Pseudomonadati</taxon>
        <taxon>Pseudomonadota</taxon>
        <taxon>Gammaproteobacteria</taxon>
        <taxon>Enterobacterales</taxon>
        <taxon>Enterobacteriaceae</taxon>
        <taxon>Escherichia</taxon>
    </lineage>
</organism>
<sequence>MKKAGLLFLVMIVIAVVATGIGYWKLTGEESDTLRKIVLEQCLPNQQENQNPSPCAEVKPNAGYVVLKDRHGPLQYLLMPTYRINGTESPLLTDPSTPNFFWLAWQARDFMSQKYGQPVPDRAVSLAINSRTGRTQNHFHIHISCIRPDVREQLDNNLANISSRWLPLPGGLRGHEYLARRVTESELVQRSPFMMLAEEVPEAREHMGSYGLAMVRQSDNSFVLLATQRNLLTLNRASAEEIQDHQCEILR</sequence>
<dbReference type="EC" id="3.6.1.26" evidence="1"/>
<dbReference type="EMBL" id="CU928161">
    <property type="protein sequence ID" value="CAR05548.1"/>
    <property type="molecule type" value="Genomic_DNA"/>
</dbReference>
<dbReference type="RefSeq" id="WP_000709001.1">
    <property type="nucleotide sequence ID" value="NC_011742.1"/>
</dbReference>
<dbReference type="SMR" id="B7MI50"/>
<dbReference type="KEGG" id="ecz:ECS88_4368"/>
<dbReference type="HOGENOM" id="CLU_077117_0_1_6"/>
<dbReference type="UniPathway" id="UPA00609">
    <property type="reaction ID" value="UER00664"/>
</dbReference>
<dbReference type="Proteomes" id="UP000000747">
    <property type="component" value="Chromosome"/>
</dbReference>
<dbReference type="GO" id="GO:0005886">
    <property type="term" value="C:plasma membrane"/>
    <property type="evidence" value="ECO:0007669"/>
    <property type="project" value="UniProtKB-SubCell"/>
</dbReference>
<dbReference type="GO" id="GO:0008715">
    <property type="term" value="F:CDP-diacylglycerol diphosphatase activity"/>
    <property type="evidence" value="ECO:0007669"/>
    <property type="project" value="UniProtKB-UniRule"/>
</dbReference>
<dbReference type="GO" id="GO:0046342">
    <property type="term" value="P:CDP-diacylglycerol catabolic process"/>
    <property type="evidence" value="ECO:0007669"/>
    <property type="project" value="UniProtKB-UniRule"/>
</dbReference>
<dbReference type="GO" id="GO:0008654">
    <property type="term" value="P:phospholipid biosynthetic process"/>
    <property type="evidence" value="ECO:0007669"/>
    <property type="project" value="UniProtKB-KW"/>
</dbReference>
<dbReference type="FunFam" id="3.30.428.30:FF:000001">
    <property type="entry name" value="CDP-diacylglycerol pyrophosphatase"/>
    <property type="match status" value="1"/>
</dbReference>
<dbReference type="Gene3D" id="3.30.428.30">
    <property type="entry name" value="HIT family - CDH-like"/>
    <property type="match status" value="1"/>
</dbReference>
<dbReference type="HAMAP" id="MF_00319">
    <property type="entry name" value="Cdh"/>
    <property type="match status" value="1"/>
</dbReference>
<dbReference type="InterPro" id="IPR003763">
    <property type="entry name" value="CDP-diacylglyc_Pase"/>
</dbReference>
<dbReference type="InterPro" id="IPR015993">
    <property type="entry name" value="CDP-diacylglyc_Pase_proteobac"/>
</dbReference>
<dbReference type="InterPro" id="IPR036265">
    <property type="entry name" value="HIT-like_sf"/>
</dbReference>
<dbReference type="NCBIfam" id="TIGR00672">
    <property type="entry name" value="cdh"/>
    <property type="match status" value="1"/>
</dbReference>
<dbReference type="NCBIfam" id="NF003986">
    <property type="entry name" value="PRK05471.1-5"/>
    <property type="match status" value="1"/>
</dbReference>
<dbReference type="NCBIfam" id="NF003987">
    <property type="entry name" value="PRK05471.1-6"/>
    <property type="match status" value="1"/>
</dbReference>
<dbReference type="Pfam" id="PF02611">
    <property type="entry name" value="CDH"/>
    <property type="match status" value="1"/>
</dbReference>
<dbReference type="PIRSF" id="PIRSF001273">
    <property type="entry name" value="CDH"/>
    <property type="match status" value="1"/>
</dbReference>
<dbReference type="SUPFAM" id="SSF54197">
    <property type="entry name" value="HIT-like"/>
    <property type="match status" value="1"/>
</dbReference>
<feature type="chain" id="PRO_1000119583" description="CDP-diacylglycerol pyrophosphatase">
    <location>
        <begin position="1"/>
        <end position="251"/>
    </location>
</feature>
<feature type="transmembrane region" description="Helical" evidence="1">
    <location>
        <begin position="4"/>
        <end position="24"/>
    </location>
</feature>